<organism>
    <name type="scientific">Delftia acidovorans (strain DSM 14801 / SPH-1)</name>
    <dbReference type="NCBI Taxonomy" id="398578"/>
    <lineage>
        <taxon>Bacteria</taxon>
        <taxon>Pseudomonadati</taxon>
        <taxon>Pseudomonadota</taxon>
        <taxon>Betaproteobacteria</taxon>
        <taxon>Burkholderiales</taxon>
        <taxon>Comamonadaceae</taxon>
        <taxon>Delftia</taxon>
    </lineage>
</organism>
<dbReference type="EMBL" id="CP000884">
    <property type="protein sequence ID" value="ABX38542.1"/>
    <property type="molecule type" value="Genomic_DNA"/>
</dbReference>
<dbReference type="RefSeq" id="WP_012207711.1">
    <property type="nucleotide sequence ID" value="NC_010002.1"/>
</dbReference>
<dbReference type="SMR" id="A9C179"/>
<dbReference type="STRING" id="398578.Daci_5914"/>
<dbReference type="GeneID" id="94690032"/>
<dbReference type="KEGG" id="dac:Daci_5914"/>
<dbReference type="eggNOG" id="COG0102">
    <property type="taxonomic scope" value="Bacteria"/>
</dbReference>
<dbReference type="HOGENOM" id="CLU_082184_2_2_4"/>
<dbReference type="Proteomes" id="UP000000784">
    <property type="component" value="Chromosome"/>
</dbReference>
<dbReference type="GO" id="GO:0022625">
    <property type="term" value="C:cytosolic large ribosomal subunit"/>
    <property type="evidence" value="ECO:0007669"/>
    <property type="project" value="TreeGrafter"/>
</dbReference>
<dbReference type="GO" id="GO:0003729">
    <property type="term" value="F:mRNA binding"/>
    <property type="evidence" value="ECO:0007669"/>
    <property type="project" value="TreeGrafter"/>
</dbReference>
<dbReference type="GO" id="GO:0003735">
    <property type="term" value="F:structural constituent of ribosome"/>
    <property type="evidence" value="ECO:0007669"/>
    <property type="project" value="InterPro"/>
</dbReference>
<dbReference type="GO" id="GO:0017148">
    <property type="term" value="P:negative regulation of translation"/>
    <property type="evidence" value="ECO:0007669"/>
    <property type="project" value="TreeGrafter"/>
</dbReference>
<dbReference type="GO" id="GO:0006412">
    <property type="term" value="P:translation"/>
    <property type="evidence" value="ECO:0007669"/>
    <property type="project" value="UniProtKB-UniRule"/>
</dbReference>
<dbReference type="CDD" id="cd00392">
    <property type="entry name" value="Ribosomal_L13"/>
    <property type="match status" value="1"/>
</dbReference>
<dbReference type="FunFam" id="3.90.1180.10:FF:000001">
    <property type="entry name" value="50S ribosomal protein L13"/>
    <property type="match status" value="1"/>
</dbReference>
<dbReference type="Gene3D" id="3.90.1180.10">
    <property type="entry name" value="Ribosomal protein L13"/>
    <property type="match status" value="1"/>
</dbReference>
<dbReference type="HAMAP" id="MF_01366">
    <property type="entry name" value="Ribosomal_uL13"/>
    <property type="match status" value="1"/>
</dbReference>
<dbReference type="InterPro" id="IPR005822">
    <property type="entry name" value="Ribosomal_uL13"/>
</dbReference>
<dbReference type="InterPro" id="IPR005823">
    <property type="entry name" value="Ribosomal_uL13_bac-type"/>
</dbReference>
<dbReference type="InterPro" id="IPR036899">
    <property type="entry name" value="Ribosomal_uL13_sf"/>
</dbReference>
<dbReference type="NCBIfam" id="TIGR01066">
    <property type="entry name" value="rplM_bact"/>
    <property type="match status" value="1"/>
</dbReference>
<dbReference type="PANTHER" id="PTHR11545:SF2">
    <property type="entry name" value="LARGE RIBOSOMAL SUBUNIT PROTEIN UL13M"/>
    <property type="match status" value="1"/>
</dbReference>
<dbReference type="PANTHER" id="PTHR11545">
    <property type="entry name" value="RIBOSOMAL PROTEIN L13"/>
    <property type="match status" value="1"/>
</dbReference>
<dbReference type="Pfam" id="PF00572">
    <property type="entry name" value="Ribosomal_L13"/>
    <property type="match status" value="1"/>
</dbReference>
<dbReference type="PIRSF" id="PIRSF002181">
    <property type="entry name" value="Ribosomal_L13"/>
    <property type="match status" value="1"/>
</dbReference>
<dbReference type="SUPFAM" id="SSF52161">
    <property type="entry name" value="Ribosomal protein L13"/>
    <property type="match status" value="1"/>
</dbReference>
<comment type="function">
    <text evidence="1">This protein is one of the early assembly proteins of the 50S ribosomal subunit, although it is not seen to bind rRNA by itself. It is important during the early stages of 50S assembly.</text>
</comment>
<comment type="subunit">
    <text evidence="1">Part of the 50S ribosomal subunit.</text>
</comment>
<comment type="similarity">
    <text evidence="1">Belongs to the universal ribosomal protein uL13 family.</text>
</comment>
<protein>
    <recommendedName>
        <fullName evidence="1">Large ribosomal subunit protein uL13</fullName>
    </recommendedName>
    <alternativeName>
        <fullName evidence="2">50S ribosomal protein L13</fullName>
    </alternativeName>
</protein>
<keyword id="KW-1185">Reference proteome</keyword>
<keyword id="KW-0687">Ribonucleoprotein</keyword>
<keyword id="KW-0689">Ribosomal protein</keyword>
<reference key="1">
    <citation type="submission" date="2007-11" db="EMBL/GenBank/DDBJ databases">
        <title>Complete sequence of Delftia acidovorans DSM 14801 / SPH-1.</title>
        <authorList>
            <person name="Copeland A."/>
            <person name="Lucas S."/>
            <person name="Lapidus A."/>
            <person name="Barry K."/>
            <person name="Glavina del Rio T."/>
            <person name="Dalin E."/>
            <person name="Tice H."/>
            <person name="Pitluck S."/>
            <person name="Lowry S."/>
            <person name="Clum A."/>
            <person name="Schmutz J."/>
            <person name="Larimer F."/>
            <person name="Land M."/>
            <person name="Hauser L."/>
            <person name="Kyrpides N."/>
            <person name="Kim E."/>
            <person name="Schleheck D."/>
            <person name="Richardson P."/>
        </authorList>
    </citation>
    <scope>NUCLEOTIDE SEQUENCE [LARGE SCALE GENOMIC DNA]</scope>
    <source>
        <strain>DSM 14801 / SPH-1</strain>
    </source>
</reference>
<accession>A9C179</accession>
<sequence length="142" mass="15616">MSTFSAKPAEVQHEWFVIDATDKVLGRVASEVALRLRGKHKAIYTPHVDTGDFIVIINASKLKVTGTKNLDKVYYRHSGFPGGITATNFRDMQAKFPGRALEKAVKGMLPKGPLGYAMIKKLKVYGGAEHPHTAQQPKALEI</sequence>
<name>RL13_DELAS</name>
<evidence type="ECO:0000255" key="1">
    <source>
        <dbReference type="HAMAP-Rule" id="MF_01366"/>
    </source>
</evidence>
<evidence type="ECO:0000305" key="2"/>
<gene>
    <name evidence="1" type="primary">rplM</name>
    <name type="ordered locus">Daci_5914</name>
</gene>
<feature type="chain" id="PRO_1000144116" description="Large ribosomal subunit protein uL13">
    <location>
        <begin position="1"/>
        <end position="142"/>
    </location>
</feature>
<proteinExistence type="inferred from homology"/>